<accession>Q9YZR5</accession>
<name>DPOL_HBVC2</name>
<reference key="1">
    <citation type="journal article" date="1998" name="Arch. Virol.">
        <title>Hepatitis B virus genomic sequence in the circulation of hepatocellular carcinoma patients: comparative analysis of 40 full-length isolates.</title>
        <authorList>
            <person name="Takahashi K."/>
            <person name="Akahane Y."/>
            <person name="Hino K."/>
            <person name="Ohta Y."/>
            <person name="Mishiro S."/>
        </authorList>
    </citation>
    <scope>NUCLEOTIDE SEQUENCE [GENOMIC DNA]</scope>
</reference>
<reference key="2">
    <citation type="journal article" date="2007" name="World J. Gastroenterol.">
        <title>Hepatitis B virus replication.</title>
        <authorList>
            <person name="Beck J."/>
            <person name="Nassal M."/>
        </authorList>
    </citation>
    <scope>REVIEW</scope>
</reference>
<feature type="chain" id="PRO_0000323262" description="Protein P">
    <location>
        <begin position="1"/>
        <end position="843"/>
    </location>
</feature>
<feature type="domain" description="Reverse transcriptase" evidence="1">
    <location>
        <begin position="357"/>
        <end position="600"/>
    </location>
</feature>
<feature type="region of interest" description="Terminal protein domain (TP)" evidence="1">
    <location>
        <begin position="1"/>
        <end position="177"/>
    </location>
</feature>
<feature type="region of interest" description="Spacer" evidence="1">
    <location>
        <begin position="178"/>
        <end position="346"/>
    </location>
</feature>
<feature type="region of interest" description="Disordered" evidence="2">
    <location>
        <begin position="218"/>
        <end position="243"/>
    </location>
</feature>
<feature type="region of interest" description="Disordered" evidence="2">
    <location>
        <begin position="290"/>
        <end position="316"/>
    </location>
</feature>
<feature type="region of interest" description="Polymerase/reverse transcriptase domain (RT)" evidence="1">
    <location>
        <begin position="347"/>
        <end position="690"/>
    </location>
</feature>
<feature type="compositionally biased region" description="Polar residues" evidence="2">
    <location>
        <begin position="290"/>
        <end position="299"/>
    </location>
</feature>
<feature type="binding site" evidence="1">
    <location>
        <position position="429"/>
    </location>
    <ligand>
        <name>Mg(2+)</name>
        <dbReference type="ChEBI" id="CHEBI:18420"/>
        <note>catalytic</note>
    </ligand>
</feature>
<feature type="binding site" evidence="1">
    <location>
        <position position="551"/>
    </location>
    <ligand>
        <name>Mg(2+)</name>
        <dbReference type="ChEBI" id="CHEBI:18420"/>
        <note>catalytic</note>
    </ligand>
</feature>
<feature type="binding site" evidence="1">
    <location>
        <position position="552"/>
    </location>
    <ligand>
        <name>Mg(2+)</name>
        <dbReference type="ChEBI" id="CHEBI:18420"/>
        <note>catalytic</note>
    </ligand>
</feature>
<feature type="site" description="Priming of reverse-transcription by covalently linking the first nucleotide of the (-)DNA" evidence="1">
    <location>
        <position position="63"/>
    </location>
</feature>
<keyword id="KW-0235">DNA replication</keyword>
<keyword id="KW-0238">DNA-binding</keyword>
<keyword id="KW-0239">DNA-directed DNA polymerase</keyword>
<keyword id="KW-0255">Endonuclease</keyword>
<keyword id="KW-0945">Host-virus interaction</keyword>
<keyword id="KW-0378">Hydrolase</keyword>
<keyword id="KW-1090">Inhibition of host innate immune response by virus</keyword>
<keyword id="KW-1113">Inhibition of host RLR pathway by virus</keyword>
<keyword id="KW-0460">Magnesium</keyword>
<keyword id="KW-0479">Metal-binding</keyword>
<keyword id="KW-0511">Multifunctional enzyme</keyword>
<keyword id="KW-0540">Nuclease</keyword>
<keyword id="KW-0548">Nucleotidyltransferase</keyword>
<keyword id="KW-0695">RNA-directed DNA polymerase</keyword>
<keyword id="KW-0808">Transferase</keyword>
<keyword id="KW-0899">Viral immunoevasion</keyword>
<organismHost>
    <name type="scientific">Homo sapiens</name>
    <name type="common">Human</name>
    <dbReference type="NCBI Taxonomy" id="9606"/>
</organismHost>
<organismHost>
    <name type="scientific">Pan troglodytes</name>
    <name type="common">Chimpanzee</name>
    <dbReference type="NCBI Taxonomy" id="9598"/>
</organismHost>
<protein>
    <recommendedName>
        <fullName evidence="1">Protein P</fullName>
    </recommendedName>
    <domain>
        <recommendedName>
            <fullName evidence="1">DNA-directed DNA polymerase</fullName>
            <ecNumber evidence="1">2.7.7.7</ecNumber>
        </recommendedName>
    </domain>
    <domain>
        <recommendedName>
            <fullName evidence="1">RNA-directed DNA polymerase</fullName>
            <ecNumber evidence="1">2.7.7.49</ecNumber>
        </recommendedName>
    </domain>
    <domain>
        <recommendedName>
            <fullName evidence="1">Ribonuclease H</fullName>
            <ecNumber evidence="1">3.1.26.4</ecNumber>
        </recommendedName>
    </domain>
</protein>
<proteinExistence type="inferred from homology"/>
<organism>
    <name type="scientific">Hepatitis B virus genotype C subtype ar (isolate Japan/S-207/1988)</name>
    <name type="common">HBV-C</name>
    <dbReference type="NCBI Taxonomy" id="489467"/>
    <lineage>
        <taxon>Viruses</taxon>
        <taxon>Riboviria</taxon>
        <taxon>Pararnavirae</taxon>
        <taxon>Artverviricota</taxon>
        <taxon>Revtraviricetes</taxon>
        <taxon>Blubervirales</taxon>
        <taxon>Hepadnaviridae</taxon>
        <taxon>Orthohepadnavirus</taxon>
        <taxon>Hepatitis B virus</taxon>
        <taxon>hepatitis B virus genotype C</taxon>
    </lineage>
</organism>
<dbReference type="EC" id="2.7.7.7" evidence="1"/>
<dbReference type="EC" id="2.7.7.49" evidence="1"/>
<dbReference type="EC" id="3.1.26.4" evidence="1"/>
<dbReference type="EMBL" id="AB014394">
    <property type="protein sequence ID" value="BAA32957.2"/>
    <property type="molecule type" value="Genomic_DNA"/>
</dbReference>
<dbReference type="Proteomes" id="UP000007922">
    <property type="component" value="Genome"/>
</dbReference>
<dbReference type="GO" id="GO:0003677">
    <property type="term" value="F:DNA binding"/>
    <property type="evidence" value="ECO:0007669"/>
    <property type="project" value="UniProtKB-UniRule"/>
</dbReference>
<dbReference type="GO" id="GO:0003887">
    <property type="term" value="F:DNA-directed DNA polymerase activity"/>
    <property type="evidence" value="ECO:0007669"/>
    <property type="project" value="UniProtKB-UniRule"/>
</dbReference>
<dbReference type="GO" id="GO:0046872">
    <property type="term" value="F:metal ion binding"/>
    <property type="evidence" value="ECO:0007669"/>
    <property type="project" value="UniProtKB-UniRule"/>
</dbReference>
<dbReference type="GO" id="GO:0003964">
    <property type="term" value="F:RNA-directed DNA polymerase activity"/>
    <property type="evidence" value="ECO:0007669"/>
    <property type="project" value="UniProtKB-UniRule"/>
</dbReference>
<dbReference type="GO" id="GO:0004523">
    <property type="term" value="F:RNA-DNA hybrid ribonuclease activity"/>
    <property type="evidence" value="ECO:0007669"/>
    <property type="project" value="UniProtKB-UniRule"/>
</dbReference>
<dbReference type="GO" id="GO:0006260">
    <property type="term" value="P:DNA replication"/>
    <property type="evidence" value="ECO:0007669"/>
    <property type="project" value="UniProtKB-UniRule"/>
</dbReference>
<dbReference type="GO" id="GO:0052170">
    <property type="term" value="P:symbiont-mediated suppression of host innate immune response"/>
    <property type="evidence" value="ECO:0007669"/>
    <property type="project" value="UniProtKB-UniRule"/>
</dbReference>
<dbReference type="FunFam" id="3.30.70.270:FF:000009">
    <property type="entry name" value="Protein P"/>
    <property type="match status" value="1"/>
</dbReference>
<dbReference type="Gene3D" id="3.30.70.270">
    <property type="match status" value="1"/>
</dbReference>
<dbReference type="HAMAP" id="MF_04073">
    <property type="entry name" value="HBV_DPOL"/>
    <property type="match status" value="1"/>
</dbReference>
<dbReference type="InterPro" id="IPR043502">
    <property type="entry name" value="DNA/RNA_pol_sf"/>
</dbReference>
<dbReference type="InterPro" id="IPR001462">
    <property type="entry name" value="DNApol_viral_C"/>
</dbReference>
<dbReference type="InterPro" id="IPR000201">
    <property type="entry name" value="DNApol_viral_N"/>
</dbReference>
<dbReference type="InterPro" id="IPR037531">
    <property type="entry name" value="HBV_DPOL"/>
</dbReference>
<dbReference type="InterPro" id="IPR043128">
    <property type="entry name" value="Rev_trsase/Diguanyl_cyclase"/>
</dbReference>
<dbReference type="InterPro" id="IPR000477">
    <property type="entry name" value="RT_dom"/>
</dbReference>
<dbReference type="InterPro" id="IPR051320">
    <property type="entry name" value="Viral_Replic_Matur_Polypro"/>
</dbReference>
<dbReference type="PANTHER" id="PTHR33064:SF29">
    <property type="entry name" value="PEPTIDASE A2 DOMAIN-CONTAINING PROTEIN-RELATED"/>
    <property type="match status" value="1"/>
</dbReference>
<dbReference type="PANTHER" id="PTHR33064">
    <property type="entry name" value="POL PROTEIN"/>
    <property type="match status" value="1"/>
</dbReference>
<dbReference type="Pfam" id="PF00336">
    <property type="entry name" value="DNA_pol_viral_C"/>
    <property type="match status" value="1"/>
</dbReference>
<dbReference type="Pfam" id="PF00242">
    <property type="entry name" value="DNA_pol_viral_N"/>
    <property type="match status" value="1"/>
</dbReference>
<dbReference type="Pfam" id="PF00078">
    <property type="entry name" value="RVT_1"/>
    <property type="match status" value="1"/>
</dbReference>
<dbReference type="SUPFAM" id="SSF56672">
    <property type="entry name" value="DNA/RNA polymerases"/>
    <property type="match status" value="1"/>
</dbReference>
<dbReference type="PROSITE" id="PS50878">
    <property type="entry name" value="RT_POL"/>
    <property type="match status" value="1"/>
</dbReference>
<gene>
    <name evidence="1" type="primary">P</name>
</gene>
<evidence type="ECO:0000255" key="1">
    <source>
        <dbReference type="HAMAP-Rule" id="MF_04073"/>
    </source>
</evidence>
<evidence type="ECO:0000256" key="2">
    <source>
        <dbReference type="SAM" id="MobiDB-lite"/>
    </source>
</evidence>
<sequence>MPLSYQHFRKLLLLDDEAGPLEEELPRLADEGLNRRVAEDLNLGNLNVSIPWTHKVGNFTGLYSSTVPVFNPEWQTPSFPNIHLQEDIINRCQQYVGPLTVNEKRRLKLIMPARFYPNLTKYLPLDKGIKPYYPEHAVNHYFKTRHYLHTLWQAGILYKRETTRSASFCGSPYSWEQELQHGRLVFQTSTRHGDESFCSQSSGILSRSPVGPCVRSQLKQSRLGLQPQQGSLARGKSGRSGSIRARVHPTTRRSFGVEPSGSGHIDNSASSASSCLHQSAVRKTAYSHLSTSKRQSSSGHAVELHNIPPSSARSQSEGPIFSCWWLQFRNSKPCSDYCLSHIVNLLEDWGPCTEHGEHNIRIPRTPARVTGGVFLVDKNPHNTTESRLVVDFSQFSRGSTHVSWPKFAVPNLQSLTNLLSSNLSWLSLDVSAAFYHIPLHPAAMPHLLVGSSGLPRYVARLSSTSRNINYQHGTMQDLHDSCSRNLYVSLLLLYKTFGRKLHLYSHPIILGFRKIPMGVGLSPFLLAQFTSAICSVVRRAFPHCLAFSYMDDVVLGAKSVQHLESLFTSVTNFLLSLGIHLNPNKTKRWGYSLNFMGYVIGSWGTLPQEHIVLKIKQCFRKLPVNRPIDWKVCQRIVGLLGFAAPFTQCGYPALMPLYACIQSKQAFTFSPTYKAFLCQQYLHLYPVARQRSGLCQVFADATPTGWGLAIGHRRMRGTFVAPLPIHTAELLAACFARSRSGAKLIGTDNSVVLSRKYTSFPWLLGCAANWILRGTSFVYVPSALNPADDPSRGRLGLYRPLLRLPFQPTTGRTSLYAVSPSVPSHLPDRVHFASPLHVAWKPP</sequence>
<comment type="function">
    <text evidence="1">Multifunctional enzyme that converts the viral RNA genome into dsDNA in viral cytoplasmic capsids. This enzyme displays a DNA polymerase activity that can copy either DNA or RNA templates, and a ribonuclease H (RNase H) activity that cleaves the RNA strand of RNA-DNA heteroduplexes in a partially processive 3'- to 5'-endonucleasic mode. Neo-synthesized pregenomic RNA (pgRNA) are encapsidated together with the P protein, and reverse-transcribed inside the nucleocapsid. Initiation of reverse-transcription occurs first by binding the epsilon loop on the pgRNA genome, and is initiated by protein priming, thereby the 5'-end of (-)DNA is covalently linked to P protein. Partial (+)DNA is synthesized from the (-)DNA template and generates the relaxed circular DNA (RC-DNA) genome. After budding and infection, the RC-DNA migrates in the nucleus, and is converted into a plasmid-like covalently closed circular DNA (cccDNA). The activity of P protein does not seem to be necessary for cccDNA generation, and is presumably released from (+)DNA by host nuclear DNA repair machinery.</text>
</comment>
<comment type="catalytic activity">
    <reaction evidence="1">
        <text>DNA(n) + a 2'-deoxyribonucleoside 5'-triphosphate = DNA(n+1) + diphosphate</text>
        <dbReference type="Rhea" id="RHEA:22508"/>
        <dbReference type="Rhea" id="RHEA-COMP:17339"/>
        <dbReference type="Rhea" id="RHEA-COMP:17340"/>
        <dbReference type="ChEBI" id="CHEBI:33019"/>
        <dbReference type="ChEBI" id="CHEBI:61560"/>
        <dbReference type="ChEBI" id="CHEBI:173112"/>
        <dbReference type="EC" id="2.7.7.7"/>
    </reaction>
</comment>
<comment type="catalytic activity">
    <reaction evidence="1">
        <text>DNA(n) + a 2'-deoxyribonucleoside 5'-triphosphate = DNA(n+1) + diphosphate</text>
        <dbReference type="Rhea" id="RHEA:22508"/>
        <dbReference type="Rhea" id="RHEA-COMP:17339"/>
        <dbReference type="Rhea" id="RHEA-COMP:17340"/>
        <dbReference type="ChEBI" id="CHEBI:33019"/>
        <dbReference type="ChEBI" id="CHEBI:61560"/>
        <dbReference type="ChEBI" id="CHEBI:173112"/>
        <dbReference type="EC" id="2.7.7.49"/>
    </reaction>
</comment>
<comment type="catalytic activity">
    <reaction evidence="1">
        <text>Endonucleolytic cleavage to 5'-phosphomonoester.</text>
        <dbReference type="EC" id="3.1.26.4"/>
    </reaction>
</comment>
<comment type="activity regulation">
    <text evidence="1">Activated by host HSP70 and HSP40 in vitro to be able to bind the epsilon loop of the pgRNA. Because deletion of the RNase H region renders the protein partly chaperone-independent, the chaperones may be needed indirectly to relieve occlusion of the RNA-binding site by this domain. Inhibited by several reverse-transcriptase inhibitors: Lamivudine, Adefovir and Entecavir.</text>
</comment>
<comment type="domain">
    <text evidence="1">Terminal protein domain (TP) is hepadnavirus-specific. Spacer domain is highly variable and separates the TP and RT domains. Polymerase/reverse-transcriptase domain (RT) and ribonuclease H domain (RH) are similar to retrovirus reverse transcriptase/RNase H.</text>
</comment>
<comment type="domain">
    <text evidence="1">The polymerase/reverse transcriptase (RT) and ribonuclease H (RH) domains are structured in five subdomains: finger, palm, thumb, connection and RNase H. Within the palm subdomain, the 'primer grip' region is thought to be involved in the positioning of the primer terminus for accommodating the incoming nucleotide. The RH domain stabilizes the association of RT with primer-template.</text>
</comment>
<comment type="miscellaneous">
    <text evidence="1">Hepadnaviral virions contain probably just one P protein molecule per particle.</text>
</comment>
<comment type="similarity">
    <text evidence="1">Belongs to the hepadnaviridae P protein family.</text>
</comment>